<sequence>MEETSVAGDPGPDAGTSTAPNAAPEPVARRQRILFVGEAATLAHVVRPFVLARSLDPSRYEVHFACDPRFNKLLGPLPFPHHPIHTVPSEEVLLKIAQGRLFYNTRTLRKYIAADRKILNEIAPDVVVGDNRLSLSVSARLAGIPYIAIANAYWSPQARRRFPLPDVPWTRFFGVRPVSILYRLYRPLIFALYCLPLNWLRRKHGLSSLGWDLCRIFTDGDYTLYADVPELVPTYNLPANHRYLGPVLWSPDVKPPTWWHSLPTDRPIIYATLGSSGGKNLLQVVLNALGRFTRDGDRGHRWPEPPEERAGQRLRRGLPAGRSGCSALRRGALQRRQPDDAAGVGGRGAGDRAPQQHGPALEHGGP</sequence>
<comment type="similarity">
    <text evidence="2">Belongs to the UDP-glycosyltransferase family.</text>
</comment>
<comment type="caution">
    <text evidence="2">This sequence is shorter than orthologs and has a completely different amino acid sequence after position 289 due to a single nucleotide insertion. This protein is not functional which could partially explain the failure of M.bovis derivatives to produce the full-length PGL.</text>
</comment>
<name>GLTR2_MYCBO</name>
<evidence type="ECO:0000256" key="1">
    <source>
        <dbReference type="SAM" id="MobiDB-lite"/>
    </source>
</evidence>
<evidence type="ECO:0000305" key="2"/>
<feature type="chain" id="PRO_0000314434" description="Inactive PGL/p-HBAD biosynthesis glycosyltransferase Mb2982c">
    <location>
        <begin position="1"/>
        <end position="366"/>
    </location>
</feature>
<feature type="region of interest" description="Disordered" evidence="1">
    <location>
        <begin position="1"/>
        <end position="23"/>
    </location>
</feature>
<feature type="region of interest" description="Disordered" evidence="1">
    <location>
        <begin position="295"/>
        <end position="366"/>
    </location>
</feature>
<feature type="compositionally biased region" description="Basic and acidic residues" evidence="1">
    <location>
        <begin position="295"/>
        <end position="311"/>
    </location>
</feature>
<organism>
    <name type="scientific">Mycobacterium bovis (strain ATCC BAA-935 / AF2122/97)</name>
    <dbReference type="NCBI Taxonomy" id="233413"/>
    <lineage>
        <taxon>Bacteria</taxon>
        <taxon>Bacillati</taxon>
        <taxon>Actinomycetota</taxon>
        <taxon>Actinomycetes</taxon>
        <taxon>Mycobacteriales</taxon>
        <taxon>Mycobacteriaceae</taxon>
        <taxon>Mycobacterium</taxon>
        <taxon>Mycobacterium tuberculosis complex</taxon>
    </lineage>
</organism>
<protein>
    <recommendedName>
        <fullName>Inactive PGL/p-HBAD biosynthesis glycosyltransferase Mb2982c</fullName>
    </recommendedName>
</protein>
<gene>
    <name type="ordered locus">BQ2027_MB2982C</name>
</gene>
<accession>Q7TXJ8</accession>
<accession>A0A1R3Y4N1</accession>
<accession>X2BM79</accession>
<keyword id="KW-1185">Reference proteome</keyword>
<reference key="1">
    <citation type="journal article" date="2003" name="Proc. Natl. Acad. Sci. U.S.A.">
        <title>The complete genome sequence of Mycobacterium bovis.</title>
        <authorList>
            <person name="Garnier T."/>
            <person name="Eiglmeier K."/>
            <person name="Camus J.-C."/>
            <person name="Medina N."/>
            <person name="Mansoor H."/>
            <person name="Pryor M."/>
            <person name="Duthoy S."/>
            <person name="Grondin S."/>
            <person name="Lacroix C."/>
            <person name="Monsempe C."/>
            <person name="Simon S."/>
            <person name="Harris B."/>
            <person name="Atkin R."/>
            <person name="Doggett J."/>
            <person name="Mayes R."/>
            <person name="Keating L."/>
            <person name="Wheeler P.R."/>
            <person name="Parkhill J."/>
            <person name="Barrell B.G."/>
            <person name="Cole S.T."/>
            <person name="Gordon S.V."/>
            <person name="Hewinson R.G."/>
        </authorList>
    </citation>
    <scope>NUCLEOTIDE SEQUENCE [LARGE SCALE GENOMIC DNA]</scope>
    <source>
        <strain>ATCC BAA-935 / AF2122/97</strain>
    </source>
</reference>
<reference key="2">
    <citation type="journal article" date="2017" name="Genome Announc.">
        <title>Updated reference genome sequence and annotation of Mycobacterium bovis AF2122/97.</title>
        <authorList>
            <person name="Malone K.M."/>
            <person name="Farrell D."/>
            <person name="Stuber T.P."/>
            <person name="Schubert O.T."/>
            <person name="Aebersold R."/>
            <person name="Robbe-Austerman S."/>
            <person name="Gordon S.V."/>
        </authorList>
    </citation>
    <scope>NUCLEOTIDE SEQUENCE [LARGE SCALE GENOMIC DNA]</scope>
    <scope>GENOME REANNOTATION</scope>
    <source>
        <strain>ATCC BAA-935 / AF2122/97</strain>
    </source>
</reference>
<proteinExistence type="inferred from homology"/>
<dbReference type="EMBL" id="LT708304">
    <property type="protein sequence ID" value="SIU01605.1"/>
    <property type="molecule type" value="Genomic_DNA"/>
</dbReference>
<dbReference type="RefSeq" id="NP_856627.1">
    <property type="nucleotide sequence ID" value="NC_002945.3"/>
</dbReference>
<dbReference type="KEGG" id="mbo:BQ2027_MB2982C"/>
<dbReference type="PATRIC" id="fig|233413.5.peg.3278"/>
<dbReference type="Proteomes" id="UP000001419">
    <property type="component" value="Chromosome"/>
</dbReference>
<dbReference type="Gene3D" id="3.40.50.2000">
    <property type="entry name" value="Glycogen Phosphorylase B"/>
    <property type="match status" value="1"/>
</dbReference>
<dbReference type="SUPFAM" id="SSF53756">
    <property type="entry name" value="UDP-Glycosyltransferase/glycogen phosphorylase"/>
    <property type="match status" value="1"/>
</dbReference>